<name>SYH_PROM5</name>
<proteinExistence type="inferred from homology"/>
<organism>
    <name type="scientific">Prochlorococcus marinus (strain MIT 9515)</name>
    <dbReference type="NCBI Taxonomy" id="167542"/>
    <lineage>
        <taxon>Bacteria</taxon>
        <taxon>Bacillati</taxon>
        <taxon>Cyanobacteriota</taxon>
        <taxon>Cyanophyceae</taxon>
        <taxon>Synechococcales</taxon>
        <taxon>Prochlorococcaceae</taxon>
        <taxon>Prochlorococcus</taxon>
    </lineage>
</organism>
<feature type="chain" id="PRO_1000016412" description="Histidine--tRNA ligase">
    <location>
        <begin position="1"/>
        <end position="429"/>
    </location>
</feature>
<comment type="catalytic activity">
    <reaction evidence="1">
        <text>tRNA(His) + L-histidine + ATP = L-histidyl-tRNA(His) + AMP + diphosphate + H(+)</text>
        <dbReference type="Rhea" id="RHEA:17313"/>
        <dbReference type="Rhea" id="RHEA-COMP:9665"/>
        <dbReference type="Rhea" id="RHEA-COMP:9689"/>
        <dbReference type="ChEBI" id="CHEBI:15378"/>
        <dbReference type="ChEBI" id="CHEBI:30616"/>
        <dbReference type="ChEBI" id="CHEBI:33019"/>
        <dbReference type="ChEBI" id="CHEBI:57595"/>
        <dbReference type="ChEBI" id="CHEBI:78442"/>
        <dbReference type="ChEBI" id="CHEBI:78527"/>
        <dbReference type="ChEBI" id="CHEBI:456215"/>
        <dbReference type="EC" id="6.1.1.21"/>
    </reaction>
</comment>
<comment type="subunit">
    <text evidence="1">Homodimer.</text>
</comment>
<comment type="subcellular location">
    <subcellularLocation>
        <location evidence="1">Cytoplasm</location>
    </subcellularLocation>
</comment>
<comment type="similarity">
    <text evidence="1">Belongs to the class-II aminoacyl-tRNA synthetase family.</text>
</comment>
<reference key="1">
    <citation type="journal article" date="2007" name="PLoS Genet.">
        <title>Patterns and implications of gene gain and loss in the evolution of Prochlorococcus.</title>
        <authorList>
            <person name="Kettler G.C."/>
            <person name="Martiny A.C."/>
            <person name="Huang K."/>
            <person name="Zucker J."/>
            <person name="Coleman M.L."/>
            <person name="Rodrigue S."/>
            <person name="Chen F."/>
            <person name="Lapidus A."/>
            <person name="Ferriera S."/>
            <person name="Johnson J."/>
            <person name="Steglich C."/>
            <person name="Church G.M."/>
            <person name="Richardson P."/>
            <person name="Chisholm S.W."/>
        </authorList>
    </citation>
    <scope>NUCLEOTIDE SEQUENCE [LARGE SCALE GENOMIC DNA]</scope>
    <source>
        <strain>MIT 9515</strain>
    </source>
</reference>
<keyword id="KW-0030">Aminoacyl-tRNA synthetase</keyword>
<keyword id="KW-0067">ATP-binding</keyword>
<keyword id="KW-0963">Cytoplasm</keyword>
<keyword id="KW-0436">Ligase</keyword>
<keyword id="KW-0547">Nucleotide-binding</keyword>
<keyword id="KW-0648">Protein biosynthesis</keyword>
<evidence type="ECO:0000255" key="1">
    <source>
        <dbReference type="HAMAP-Rule" id="MF_00127"/>
    </source>
</evidence>
<accession>A2BVT6</accession>
<dbReference type="EC" id="6.1.1.21" evidence="1"/>
<dbReference type="EMBL" id="CP000552">
    <property type="protein sequence ID" value="ABM71897.1"/>
    <property type="molecule type" value="Genomic_DNA"/>
</dbReference>
<dbReference type="RefSeq" id="WP_011820002.1">
    <property type="nucleotide sequence ID" value="NC_008817.1"/>
</dbReference>
<dbReference type="SMR" id="A2BVT6"/>
<dbReference type="STRING" id="167542.P9515_06881"/>
<dbReference type="GeneID" id="60201842"/>
<dbReference type="KEGG" id="pmc:P9515_06881"/>
<dbReference type="eggNOG" id="COG0124">
    <property type="taxonomic scope" value="Bacteria"/>
</dbReference>
<dbReference type="HOGENOM" id="CLU_025113_1_1_3"/>
<dbReference type="OrthoDB" id="9800814at2"/>
<dbReference type="Proteomes" id="UP000001589">
    <property type="component" value="Chromosome"/>
</dbReference>
<dbReference type="GO" id="GO:0005737">
    <property type="term" value="C:cytoplasm"/>
    <property type="evidence" value="ECO:0007669"/>
    <property type="project" value="UniProtKB-SubCell"/>
</dbReference>
<dbReference type="GO" id="GO:0005524">
    <property type="term" value="F:ATP binding"/>
    <property type="evidence" value="ECO:0007669"/>
    <property type="project" value="UniProtKB-UniRule"/>
</dbReference>
<dbReference type="GO" id="GO:0004821">
    <property type="term" value="F:histidine-tRNA ligase activity"/>
    <property type="evidence" value="ECO:0007669"/>
    <property type="project" value="UniProtKB-UniRule"/>
</dbReference>
<dbReference type="GO" id="GO:0006427">
    <property type="term" value="P:histidyl-tRNA aminoacylation"/>
    <property type="evidence" value="ECO:0007669"/>
    <property type="project" value="UniProtKB-UniRule"/>
</dbReference>
<dbReference type="CDD" id="cd00773">
    <property type="entry name" value="HisRS-like_core"/>
    <property type="match status" value="1"/>
</dbReference>
<dbReference type="Gene3D" id="3.40.50.800">
    <property type="entry name" value="Anticodon-binding domain"/>
    <property type="match status" value="1"/>
</dbReference>
<dbReference type="Gene3D" id="3.30.930.10">
    <property type="entry name" value="Bira Bifunctional Protein, Domain 2"/>
    <property type="match status" value="1"/>
</dbReference>
<dbReference type="HAMAP" id="MF_00127">
    <property type="entry name" value="His_tRNA_synth"/>
    <property type="match status" value="1"/>
</dbReference>
<dbReference type="InterPro" id="IPR006195">
    <property type="entry name" value="aa-tRNA-synth_II"/>
</dbReference>
<dbReference type="InterPro" id="IPR045864">
    <property type="entry name" value="aa-tRNA-synth_II/BPL/LPL"/>
</dbReference>
<dbReference type="InterPro" id="IPR004154">
    <property type="entry name" value="Anticodon-bd"/>
</dbReference>
<dbReference type="InterPro" id="IPR036621">
    <property type="entry name" value="Anticodon-bd_dom_sf"/>
</dbReference>
<dbReference type="InterPro" id="IPR015807">
    <property type="entry name" value="His-tRNA-ligase"/>
</dbReference>
<dbReference type="InterPro" id="IPR041715">
    <property type="entry name" value="HisRS-like_core"/>
</dbReference>
<dbReference type="InterPro" id="IPR004516">
    <property type="entry name" value="HisRS/HisZ"/>
</dbReference>
<dbReference type="NCBIfam" id="TIGR00442">
    <property type="entry name" value="hisS"/>
    <property type="match status" value="1"/>
</dbReference>
<dbReference type="PANTHER" id="PTHR43707:SF1">
    <property type="entry name" value="HISTIDINE--TRNA LIGASE, MITOCHONDRIAL-RELATED"/>
    <property type="match status" value="1"/>
</dbReference>
<dbReference type="PANTHER" id="PTHR43707">
    <property type="entry name" value="HISTIDYL-TRNA SYNTHETASE"/>
    <property type="match status" value="1"/>
</dbReference>
<dbReference type="Pfam" id="PF03129">
    <property type="entry name" value="HGTP_anticodon"/>
    <property type="match status" value="1"/>
</dbReference>
<dbReference type="Pfam" id="PF13393">
    <property type="entry name" value="tRNA-synt_His"/>
    <property type="match status" value="1"/>
</dbReference>
<dbReference type="PIRSF" id="PIRSF001549">
    <property type="entry name" value="His-tRNA_synth"/>
    <property type="match status" value="1"/>
</dbReference>
<dbReference type="SUPFAM" id="SSF52954">
    <property type="entry name" value="Class II aaRS ABD-related"/>
    <property type="match status" value="1"/>
</dbReference>
<dbReference type="SUPFAM" id="SSF55681">
    <property type="entry name" value="Class II aaRS and biotin synthetases"/>
    <property type="match status" value="1"/>
</dbReference>
<dbReference type="PROSITE" id="PS50862">
    <property type="entry name" value="AA_TRNA_LIGASE_II"/>
    <property type="match status" value="1"/>
</dbReference>
<protein>
    <recommendedName>
        <fullName evidence="1">Histidine--tRNA ligase</fullName>
        <ecNumber evidence="1">6.1.1.21</ecNumber>
    </recommendedName>
    <alternativeName>
        <fullName evidence="1">Histidyl-tRNA synthetase</fullName>
        <shortName evidence="1">HisRS</shortName>
    </alternativeName>
</protein>
<gene>
    <name evidence="1" type="primary">hisS</name>
    <name type="ordered locus">P9515_06881</name>
</gene>
<sequence>MNNLKNLRGTVDLLPDNLIKWQNVEKIILELLLRASVKEIRTPILEMTELFMRGIGEGTDVVSKEMYTFLDRGERSCTLRPEGTASVARAIIQNGISSKSLQKLWYMGPMFRYERPQAGRQRQFHQLGVEFIGYDSVRSDIEIIALAWDILEKLGIKELNLEINTLGDFNDRSNFQKAFLKWLEVNKNDLDLDSQNRIVKNPLRIFDTKNAKTKSILEDAPKLFDFLSEKSLKRYINIKEMLKLLKIPFIENFNLVRGLDYYTHTAFEITSGALGSQATVCGGGRYDNLINQMGGTETPAIGFAIGLERLILLAGKDLEESRETDIYIVNKGFQAEILAIDLSRKLRNYDLIIELDLSGASFSKQFKKANKLKSKSIIIIGDDEALKNEFKIRLFNNINVENHEANISFEDDIKLEKWLKTNFLLDKNL</sequence>